<feature type="chain" id="PRO_0000179659" description="ATP-dependent Clp protease proteolytic subunit 1">
    <location>
        <begin position="1"/>
        <end position="217"/>
    </location>
</feature>
<feature type="region of interest" description="Disordered" evidence="2">
    <location>
        <begin position="1"/>
        <end position="24"/>
    </location>
</feature>
<feature type="active site" description="Nucleophile" evidence="1">
    <location>
        <position position="108"/>
    </location>
</feature>
<feature type="active site" evidence="1">
    <location>
        <position position="133"/>
    </location>
</feature>
<proteinExistence type="inferred from homology"/>
<reference key="1">
    <citation type="journal article" date="2001" name="Proc. Natl. Acad. Sci. U.S.A.">
        <title>Genome sequence of an industrial microorganism Streptomyces avermitilis: deducing the ability of producing secondary metabolites.</title>
        <authorList>
            <person name="Omura S."/>
            <person name="Ikeda H."/>
            <person name="Ishikawa J."/>
            <person name="Hanamoto A."/>
            <person name="Takahashi C."/>
            <person name="Shinose M."/>
            <person name="Takahashi Y."/>
            <person name="Horikawa H."/>
            <person name="Nakazawa H."/>
            <person name="Osonoe T."/>
            <person name="Kikuchi H."/>
            <person name="Shiba T."/>
            <person name="Sakaki Y."/>
            <person name="Hattori M."/>
        </authorList>
    </citation>
    <scope>NUCLEOTIDE SEQUENCE [LARGE SCALE GENOMIC DNA]</scope>
    <source>
        <strain>ATCC 31267 / DSM 46492 / JCM 5070 / NBRC 14893 / NCIMB 12804 / NRRL 8165 / MA-4680</strain>
    </source>
</reference>
<reference key="2">
    <citation type="journal article" date="2003" name="Nat. Biotechnol.">
        <title>Complete genome sequence and comparative analysis of the industrial microorganism Streptomyces avermitilis.</title>
        <authorList>
            <person name="Ikeda H."/>
            <person name="Ishikawa J."/>
            <person name="Hanamoto A."/>
            <person name="Shinose M."/>
            <person name="Kikuchi H."/>
            <person name="Shiba T."/>
            <person name="Sakaki Y."/>
            <person name="Hattori M."/>
            <person name="Omura S."/>
        </authorList>
    </citation>
    <scope>NUCLEOTIDE SEQUENCE [LARGE SCALE GENOMIC DNA]</scope>
    <source>
        <strain>ATCC 31267 / DSM 46492 / JCM 5070 / NBRC 14893 / NCIMB 12804 / NRRL 8165 / MA-4680</strain>
    </source>
</reference>
<keyword id="KW-0963">Cytoplasm</keyword>
<keyword id="KW-0378">Hydrolase</keyword>
<keyword id="KW-0645">Protease</keyword>
<keyword id="KW-1185">Reference proteome</keyword>
<keyword id="KW-0720">Serine protease</keyword>
<dbReference type="EC" id="3.4.21.92" evidence="1"/>
<dbReference type="EMBL" id="BA000030">
    <property type="protein sequence ID" value="BAC68856.1"/>
    <property type="molecule type" value="Genomic_DNA"/>
</dbReference>
<dbReference type="RefSeq" id="WP_010982584.1">
    <property type="nucleotide sequence ID" value="NC_003155.5"/>
</dbReference>
<dbReference type="SMR" id="Q82NZ4"/>
<dbReference type="MEROPS" id="S14.008"/>
<dbReference type="GeneID" id="41538252"/>
<dbReference type="KEGG" id="sma:SAVERM_1146"/>
<dbReference type="eggNOG" id="COG0740">
    <property type="taxonomic scope" value="Bacteria"/>
</dbReference>
<dbReference type="HOGENOM" id="CLU_058707_4_1_11"/>
<dbReference type="Proteomes" id="UP000000428">
    <property type="component" value="Chromosome"/>
</dbReference>
<dbReference type="GO" id="GO:0005737">
    <property type="term" value="C:cytoplasm"/>
    <property type="evidence" value="ECO:0007669"/>
    <property type="project" value="UniProtKB-SubCell"/>
</dbReference>
<dbReference type="GO" id="GO:0009368">
    <property type="term" value="C:endopeptidase Clp complex"/>
    <property type="evidence" value="ECO:0007669"/>
    <property type="project" value="TreeGrafter"/>
</dbReference>
<dbReference type="GO" id="GO:0004176">
    <property type="term" value="F:ATP-dependent peptidase activity"/>
    <property type="evidence" value="ECO:0007669"/>
    <property type="project" value="InterPro"/>
</dbReference>
<dbReference type="GO" id="GO:0051117">
    <property type="term" value="F:ATPase binding"/>
    <property type="evidence" value="ECO:0007669"/>
    <property type="project" value="TreeGrafter"/>
</dbReference>
<dbReference type="GO" id="GO:0004252">
    <property type="term" value="F:serine-type endopeptidase activity"/>
    <property type="evidence" value="ECO:0007669"/>
    <property type="project" value="UniProtKB-UniRule"/>
</dbReference>
<dbReference type="GO" id="GO:0006515">
    <property type="term" value="P:protein quality control for misfolded or incompletely synthesized proteins"/>
    <property type="evidence" value="ECO:0007669"/>
    <property type="project" value="TreeGrafter"/>
</dbReference>
<dbReference type="CDD" id="cd07017">
    <property type="entry name" value="S14_ClpP_2"/>
    <property type="match status" value="1"/>
</dbReference>
<dbReference type="FunFam" id="3.90.226.10:FF:000002">
    <property type="entry name" value="ATP-dependent Clp protease proteolytic subunit"/>
    <property type="match status" value="1"/>
</dbReference>
<dbReference type="Gene3D" id="3.90.226.10">
    <property type="entry name" value="2-enoyl-CoA Hydratase, Chain A, domain 1"/>
    <property type="match status" value="1"/>
</dbReference>
<dbReference type="HAMAP" id="MF_00444">
    <property type="entry name" value="ClpP"/>
    <property type="match status" value="1"/>
</dbReference>
<dbReference type="InterPro" id="IPR001907">
    <property type="entry name" value="ClpP"/>
</dbReference>
<dbReference type="InterPro" id="IPR029045">
    <property type="entry name" value="ClpP/crotonase-like_dom_sf"/>
</dbReference>
<dbReference type="InterPro" id="IPR023562">
    <property type="entry name" value="ClpP/TepA"/>
</dbReference>
<dbReference type="InterPro" id="IPR033135">
    <property type="entry name" value="ClpP_His_AS"/>
</dbReference>
<dbReference type="NCBIfam" id="NF001368">
    <property type="entry name" value="PRK00277.1"/>
    <property type="match status" value="1"/>
</dbReference>
<dbReference type="NCBIfam" id="NF009205">
    <property type="entry name" value="PRK12553.1"/>
    <property type="match status" value="1"/>
</dbReference>
<dbReference type="PANTHER" id="PTHR10381">
    <property type="entry name" value="ATP-DEPENDENT CLP PROTEASE PROTEOLYTIC SUBUNIT"/>
    <property type="match status" value="1"/>
</dbReference>
<dbReference type="PANTHER" id="PTHR10381:SF70">
    <property type="entry name" value="ATP-DEPENDENT CLP PROTEASE PROTEOLYTIC SUBUNIT"/>
    <property type="match status" value="1"/>
</dbReference>
<dbReference type="Pfam" id="PF00574">
    <property type="entry name" value="CLP_protease"/>
    <property type="match status" value="1"/>
</dbReference>
<dbReference type="PRINTS" id="PR00127">
    <property type="entry name" value="CLPPROTEASEP"/>
</dbReference>
<dbReference type="SUPFAM" id="SSF52096">
    <property type="entry name" value="ClpP/crotonase"/>
    <property type="match status" value="1"/>
</dbReference>
<dbReference type="PROSITE" id="PS00382">
    <property type="entry name" value="CLP_PROTEASE_HIS"/>
    <property type="match status" value="1"/>
</dbReference>
<name>CLPP1_STRAW</name>
<gene>
    <name evidence="1" type="primary">clpP1</name>
    <name type="ordered locus">SAV_1146</name>
</gene>
<accession>Q82NZ4</accession>
<evidence type="ECO:0000255" key="1">
    <source>
        <dbReference type="HAMAP-Rule" id="MF_00444"/>
    </source>
</evidence>
<evidence type="ECO:0000256" key="2">
    <source>
        <dbReference type="SAM" id="MobiDB-lite"/>
    </source>
</evidence>
<protein>
    <recommendedName>
        <fullName evidence="1">ATP-dependent Clp protease proteolytic subunit 1</fullName>
        <ecNumber evidence="1">3.4.21.92</ecNumber>
    </recommendedName>
    <alternativeName>
        <fullName evidence="1">Endopeptidase Clp 1</fullName>
    </alternativeName>
</protein>
<organism>
    <name type="scientific">Streptomyces avermitilis (strain ATCC 31267 / DSM 46492 / JCM 5070 / NBRC 14893 / NCIMB 12804 / NRRL 8165 / MA-4680)</name>
    <dbReference type="NCBI Taxonomy" id="227882"/>
    <lineage>
        <taxon>Bacteria</taxon>
        <taxon>Bacillati</taxon>
        <taxon>Actinomycetota</taxon>
        <taxon>Actinomycetes</taxon>
        <taxon>Kitasatosporales</taxon>
        <taxon>Streptomycetaceae</taxon>
        <taxon>Streptomyces</taxon>
    </lineage>
</organism>
<comment type="function">
    <text evidence="1">Cleaves peptides in various proteins in a process that requires ATP hydrolysis. Has a chymotrypsin-like activity. Plays a major role in the degradation of misfolded proteins.</text>
</comment>
<comment type="catalytic activity">
    <reaction evidence="1">
        <text>Hydrolysis of proteins to small peptides in the presence of ATP and magnesium. alpha-casein is the usual test substrate. In the absence of ATP, only oligopeptides shorter than five residues are hydrolyzed (such as succinyl-Leu-Tyr-|-NHMec, and Leu-Tyr-Leu-|-Tyr-Trp, in which cleavage of the -Tyr-|-Leu- and -Tyr-|-Trp bonds also occurs).</text>
        <dbReference type="EC" id="3.4.21.92"/>
    </reaction>
</comment>
<comment type="subunit">
    <text evidence="1">Fourteen ClpP subunits assemble into 2 heptameric rings which stack back to back to give a disk-like structure with a central cavity, resembling the structure of eukaryotic proteasomes.</text>
</comment>
<comment type="subcellular location">
    <subcellularLocation>
        <location evidence="1">Cytoplasm</location>
    </subcellularLocation>
</comment>
<comment type="similarity">
    <text evidence="1">Belongs to the peptidase S14 family.</text>
</comment>
<sequence>MTPLTTGWHPALSPRAEEGDTPPSRFDDHLAAQLLAQRIVLLGTQVDEVSANRVCAQLLLLSAEDSRTDISLYINSPGGSVTAGLAIYDTMRLIPNDVSTLAMGFAASMGQFLLSVGAAGKRFALPNARIMMHQPSAGIGGTTADIEIQAENLEFTKKAIERITAEHTGQSEETISRDGDRDRWFTAEQAKEYGMVDRVVESLDDVRPTASRRRMGL</sequence>